<protein>
    <recommendedName>
        <fullName evidence="1">Cytochrome c biogenesis ATP-binding export protein CcmA</fullName>
        <ecNumber evidence="1">7.6.2.5</ecNumber>
    </recommendedName>
    <alternativeName>
        <fullName evidence="1">Heme exporter protein A</fullName>
    </alternativeName>
</protein>
<accession>Q0I074</accession>
<proteinExistence type="inferred from homology"/>
<gene>
    <name evidence="1" type="primary">ccmA</name>
    <name type="ordered locus">Shewmr7_0226</name>
</gene>
<dbReference type="EC" id="7.6.2.5" evidence="1"/>
<dbReference type="EMBL" id="CP000444">
    <property type="protein sequence ID" value="ABI41231.1"/>
    <property type="molecule type" value="Genomic_DNA"/>
</dbReference>
<dbReference type="SMR" id="Q0I074"/>
<dbReference type="KEGG" id="shm:Shewmr7_0226"/>
<dbReference type="HOGENOM" id="CLU_000604_1_2_6"/>
<dbReference type="GO" id="GO:0005886">
    <property type="term" value="C:plasma membrane"/>
    <property type="evidence" value="ECO:0007669"/>
    <property type="project" value="UniProtKB-SubCell"/>
</dbReference>
<dbReference type="GO" id="GO:0015439">
    <property type="term" value="F:ABC-type heme transporter activity"/>
    <property type="evidence" value="ECO:0007669"/>
    <property type="project" value="UniProtKB-EC"/>
</dbReference>
<dbReference type="GO" id="GO:0005524">
    <property type="term" value="F:ATP binding"/>
    <property type="evidence" value="ECO:0007669"/>
    <property type="project" value="UniProtKB-KW"/>
</dbReference>
<dbReference type="GO" id="GO:0016887">
    <property type="term" value="F:ATP hydrolysis activity"/>
    <property type="evidence" value="ECO:0007669"/>
    <property type="project" value="InterPro"/>
</dbReference>
<dbReference type="GO" id="GO:0017004">
    <property type="term" value="P:cytochrome complex assembly"/>
    <property type="evidence" value="ECO:0007669"/>
    <property type="project" value="UniProtKB-KW"/>
</dbReference>
<dbReference type="Gene3D" id="3.40.50.300">
    <property type="entry name" value="P-loop containing nucleotide triphosphate hydrolases"/>
    <property type="match status" value="1"/>
</dbReference>
<dbReference type="InterPro" id="IPR003593">
    <property type="entry name" value="AAA+_ATPase"/>
</dbReference>
<dbReference type="InterPro" id="IPR003439">
    <property type="entry name" value="ABC_transporter-like_ATP-bd"/>
</dbReference>
<dbReference type="InterPro" id="IPR005895">
    <property type="entry name" value="ABC_transptr_haem_export_CcmA"/>
</dbReference>
<dbReference type="InterPro" id="IPR027417">
    <property type="entry name" value="P-loop_NTPase"/>
</dbReference>
<dbReference type="NCBIfam" id="TIGR01189">
    <property type="entry name" value="ccmA"/>
    <property type="match status" value="1"/>
</dbReference>
<dbReference type="NCBIfam" id="NF010061">
    <property type="entry name" value="PRK13538.1"/>
    <property type="match status" value="1"/>
</dbReference>
<dbReference type="PANTHER" id="PTHR43499">
    <property type="entry name" value="ABC TRANSPORTER I FAMILY MEMBER 1"/>
    <property type="match status" value="1"/>
</dbReference>
<dbReference type="PANTHER" id="PTHR43499:SF1">
    <property type="entry name" value="ABC TRANSPORTER I FAMILY MEMBER 1"/>
    <property type="match status" value="1"/>
</dbReference>
<dbReference type="Pfam" id="PF00005">
    <property type="entry name" value="ABC_tran"/>
    <property type="match status" value="1"/>
</dbReference>
<dbReference type="SMART" id="SM00382">
    <property type="entry name" value="AAA"/>
    <property type="match status" value="1"/>
</dbReference>
<dbReference type="SUPFAM" id="SSF52540">
    <property type="entry name" value="P-loop containing nucleoside triphosphate hydrolases"/>
    <property type="match status" value="1"/>
</dbReference>
<dbReference type="PROSITE" id="PS50893">
    <property type="entry name" value="ABC_TRANSPORTER_2"/>
    <property type="match status" value="1"/>
</dbReference>
<dbReference type="PROSITE" id="PS51243">
    <property type="entry name" value="CCMA"/>
    <property type="match status" value="1"/>
</dbReference>
<comment type="function">
    <text evidence="1">Part of the ABC transporter complex CcmAB involved in the biogenesis of c-type cytochromes; once thought to export heme, this seems not to be the case, but its exact role is uncertain. Responsible for energy coupling to the transport system.</text>
</comment>
<comment type="catalytic activity">
    <reaction evidence="1">
        <text>heme b(in) + ATP + H2O = heme b(out) + ADP + phosphate + H(+)</text>
        <dbReference type="Rhea" id="RHEA:19261"/>
        <dbReference type="ChEBI" id="CHEBI:15377"/>
        <dbReference type="ChEBI" id="CHEBI:15378"/>
        <dbReference type="ChEBI" id="CHEBI:30616"/>
        <dbReference type="ChEBI" id="CHEBI:43474"/>
        <dbReference type="ChEBI" id="CHEBI:60344"/>
        <dbReference type="ChEBI" id="CHEBI:456216"/>
        <dbReference type="EC" id="7.6.2.5"/>
    </reaction>
</comment>
<comment type="subunit">
    <text evidence="1">The complex is composed of two ATP-binding proteins (CcmA) and two transmembrane proteins (CcmB).</text>
</comment>
<comment type="subcellular location">
    <subcellularLocation>
        <location evidence="1">Cell inner membrane</location>
        <topology evidence="1">Peripheral membrane protein</topology>
    </subcellularLocation>
</comment>
<comment type="similarity">
    <text evidence="1">Belongs to the ABC transporter superfamily. CcmA exporter (TC 3.A.1.107) family.</text>
</comment>
<keyword id="KW-0067">ATP-binding</keyword>
<keyword id="KW-0997">Cell inner membrane</keyword>
<keyword id="KW-1003">Cell membrane</keyword>
<keyword id="KW-0201">Cytochrome c-type biogenesis</keyword>
<keyword id="KW-0472">Membrane</keyword>
<keyword id="KW-0547">Nucleotide-binding</keyword>
<keyword id="KW-1278">Translocase</keyword>
<keyword id="KW-0813">Transport</keyword>
<organism>
    <name type="scientific">Shewanella sp. (strain MR-7)</name>
    <dbReference type="NCBI Taxonomy" id="60481"/>
    <lineage>
        <taxon>Bacteria</taxon>
        <taxon>Pseudomonadati</taxon>
        <taxon>Pseudomonadota</taxon>
        <taxon>Gammaproteobacteria</taxon>
        <taxon>Alteromonadales</taxon>
        <taxon>Shewanellaceae</taxon>
        <taxon>Shewanella</taxon>
    </lineage>
</organism>
<evidence type="ECO:0000255" key="1">
    <source>
        <dbReference type="HAMAP-Rule" id="MF_01707"/>
    </source>
</evidence>
<sequence>MTNITSVNTLVSASKLTCIREERILFDELSFDINAGDIVQIEGPNGAGKTSLLRILAGLSRPYAGQTFYLNEDINRCRDEYNEDLLYLGHLAGVKSELTAEENLNFNLRISGYDDFDTAAILAKVNLAGFEEALAGHLSAGQHRRTALARLWHNDCKVWILDEPFTAIDKKGVEELEQLFIQHADNGGCVILTTHQDMGIIKDDRLRKIRLDYRFV</sequence>
<reference key="1">
    <citation type="submission" date="2006-08" db="EMBL/GenBank/DDBJ databases">
        <title>Complete sequence of chromosome 1 of Shewanella sp. MR-7.</title>
        <authorList>
            <person name="Copeland A."/>
            <person name="Lucas S."/>
            <person name="Lapidus A."/>
            <person name="Barry K."/>
            <person name="Detter J.C."/>
            <person name="Glavina del Rio T."/>
            <person name="Hammon N."/>
            <person name="Israni S."/>
            <person name="Dalin E."/>
            <person name="Tice H."/>
            <person name="Pitluck S."/>
            <person name="Kiss H."/>
            <person name="Brettin T."/>
            <person name="Bruce D."/>
            <person name="Han C."/>
            <person name="Tapia R."/>
            <person name="Gilna P."/>
            <person name="Schmutz J."/>
            <person name="Larimer F."/>
            <person name="Land M."/>
            <person name="Hauser L."/>
            <person name="Kyrpides N."/>
            <person name="Mikhailova N."/>
            <person name="Nealson K."/>
            <person name="Konstantinidis K."/>
            <person name="Klappenbach J."/>
            <person name="Tiedje J."/>
            <person name="Richardson P."/>
        </authorList>
    </citation>
    <scope>NUCLEOTIDE SEQUENCE [LARGE SCALE GENOMIC DNA]</scope>
    <source>
        <strain>MR-7</strain>
    </source>
</reference>
<feature type="chain" id="PRO_0000271958" description="Cytochrome c biogenesis ATP-binding export protein CcmA">
    <location>
        <begin position="1"/>
        <end position="216"/>
    </location>
</feature>
<feature type="domain" description="ABC transporter" evidence="1">
    <location>
        <begin position="11"/>
        <end position="216"/>
    </location>
</feature>
<feature type="binding site" evidence="1">
    <location>
        <begin position="43"/>
        <end position="50"/>
    </location>
    <ligand>
        <name>ATP</name>
        <dbReference type="ChEBI" id="CHEBI:30616"/>
    </ligand>
</feature>
<name>CCMA_SHESR</name>